<organism>
    <name type="scientific">Arabidopsis thaliana</name>
    <name type="common">Mouse-ear cress</name>
    <dbReference type="NCBI Taxonomy" id="3702"/>
    <lineage>
        <taxon>Eukaryota</taxon>
        <taxon>Viridiplantae</taxon>
        <taxon>Streptophyta</taxon>
        <taxon>Embryophyta</taxon>
        <taxon>Tracheophyta</taxon>
        <taxon>Spermatophyta</taxon>
        <taxon>Magnoliopsida</taxon>
        <taxon>eudicotyledons</taxon>
        <taxon>Gunneridae</taxon>
        <taxon>Pentapetalae</taxon>
        <taxon>rosids</taxon>
        <taxon>malvids</taxon>
        <taxon>Brassicales</taxon>
        <taxon>Brassicaceae</taxon>
        <taxon>Camelineae</taxon>
        <taxon>Arabidopsis</taxon>
    </lineage>
</organism>
<gene>
    <name evidence="4" type="primary">FLY1</name>
    <name evidence="7" type="ordered locus">At4g28370</name>
    <name evidence="8" type="ORF">F20O9.50</name>
</gene>
<reference key="1">
    <citation type="journal article" date="1999" name="Nature">
        <title>Sequence and analysis of chromosome 4 of the plant Arabidopsis thaliana.</title>
        <authorList>
            <person name="Mayer K.F.X."/>
            <person name="Schueller C."/>
            <person name="Wambutt R."/>
            <person name="Murphy G."/>
            <person name="Volckaert G."/>
            <person name="Pohl T."/>
            <person name="Duesterhoeft A."/>
            <person name="Stiekema W."/>
            <person name="Entian K.-D."/>
            <person name="Terryn N."/>
            <person name="Harris B."/>
            <person name="Ansorge W."/>
            <person name="Brandt P."/>
            <person name="Grivell L.A."/>
            <person name="Rieger M."/>
            <person name="Weichselgartner M."/>
            <person name="de Simone V."/>
            <person name="Obermaier B."/>
            <person name="Mache R."/>
            <person name="Mueller M."/>
            <person name="Kreis M."/>
            <person name="Delseny M."/>
            <person name="Puigdomenech P."/>
            <person name="Watson M."/>
            <person name="Schmidtheini T."/>
            <person name="Reichert B."/>
            <person name="Portetelle D."/>
            <person name="Perez-Alonso M."/>
            <person name="Boutry M."/>
            <person name="Bancroft I."/>
            <person name="Vos P."/>
            <person name="Hoheisel J."/>
            <person name="Zimmermann W."/>
            <person name="Wedler H."/>
            <person name="Ridley P."/>
            <person name="Langham S.-A."/>
            <person name="McCullagh B."/>
            <person name="Bilham L."/>
            <person name="Robben J."/>
            <person name="van der Schueren J."/>
            <person name="Grymonprez B."/>
            <person name="Chuang Y.-J."/>
            <person name="Vandenbussche F."/>
            <person name="Braeken M."/>
            <person name="Weltjens I."/>
            <person name="Voet M."/>
            <person name="Bastiaens I."/>
            <person name="Aert R."/>
            <person name="Defoor E."/>
            <person name="Weitzenegger T."/>
            <person name="Bothe G."/>
            <person name="Ramsperger U."/>
            <person name="Hilbert H."/>
            <person name="Braun M."/>
            <person name="Holzer E."/>
            <person name="Brandt A."/>
            <person name="Peters S."/>
            <person name="van Staveren M."/>
            <person name="Dirkse W."/>
            <person name="Mooijman P."/>
            <person name="Klein Lankhorst R."/>
            <person name="Rose M."/>
            <person name="Hauf J."/>
            <person name="Koetter P."/>
            <person name="Berneiser S."/>
            <person name="Hempel S."/>
            <person name="Feldpausch M."/>
            <person name="Lamberth S."/>
            <person name="Van den Daele H."/>
            <person name="De Keyser A."/>
            <person name="Buysshaert C."/>
            <person name="Gielen J."/>
            <person name="Villarroel R."/>
            <person name="De Clercq R."/>
            <person name="van Montagu M."/>
            <person name="Rogers J."/>
            <person name="Cronin A."/>
            <person name="Quail M.A."/>
            <person name="Bray-Allen S."/>
            <person name="Clark L."/>
            <person name="Doggett J."/>
            <person name="Hall S."/>
            <person name="Kay M."/>
            <person name="Lennard N."/>
            <person name="McLay K."/>
            <person name="Mayes R."/>
            <person name="Pettett A."/>
            <person name="Rajandream M.A."/>
            <person name="Lyne M."/>
            <person name="Benes V."/>
            <person name="Rechmann S."/>
            <person name="Borkova D."/>
            <person name="Bloecker H."/>
            <person name="Scharfe M."/>
            <person name="Grimm M."/>
            <person name="Loehnert T.-H."/>
            <person name="Dose S."/>
            <person name="de Haan M."/>
            <person name="Maarse A.C."/>
            <person name="Schaefer M."/>
            <person name="Mueller-Auer S."/>
            <person name="Gabel C."/>
            <person name="Fuchs M."/>
            <person name="Fartmann B."/>
            <person name="Granderath K."/>
            <person name="Dauner D."/>
            <person name="Herzl A."/>
            <person name="Neumann S."/>
            <person name="Argiriou A."/>
            <person name="Vitale D."/>
            <person name="Liguori R."/>
            <person name="Piravandi E."/>
            <person name="Massenet O."/>
            <person name="Quigley F."/>
            <person name="Clabauld G."/>
            <person name="Muendlein A."/>
            <person name="Felber R."/>
            <person name="Schnabl S."/>
            <person name="Hiller R."/>
            <person name="Schmidt W."/>
            <person name="Lecharny A."/>
            <person name="Aubourg S."/>
            <person name="Chefdor F."/>
            <person name="Cooke R."/>
            <person name="Berger C."/>
            <person name="Monfort A."/>
            <person name="Casacuberta E."/>
            <person name="Gibbons T."/>
            <person name="Weber N."/>
            <person name="Vandenbol M."/>
            <person name="Bargues M."/>
            <person name="Terol J."/>
            <person name="Torres A."/>
            <person name="Perez-Perez A."/>
            <person name="Purnelle B."/>
            <person name="Bent E."/>
            <person name="Johnson S."/>
            <person name="Tacon D."/>
            <person name="Jesse T."/>
            <person name="Heijnen L."/>
            <person name="Schwarz S."/>
            <person name="Scholler P."/>
            <person name="Heber S."/>
            <person name="Francs P."/>
            <person name="Bielke C."/>
            <person name="Frishman D."/>
            <person name="Haase D."/>
            <person name="Lemcke K."/>
            <person name="Mewes H.-W."/>
            <person name="Stocker S."/>
            <person name="Zaccaria P."/>
            <person name="Bevan M."/>
            <person name="Wilson R.K."/>
            <person name="de la Bastide M."/>
            <person name="Habermann K."/>
            <person name="Parnell L."/>
            <person name="Dedhia N."/>
            <person name="Gnoj L."/>
            <person name="Schutz K."/>
            <person name="Huang E."/>
            <person name="Spiegel L."/>
            <person name="Sekhon M."/>
            <person name="Murray J."/>
            <person name="Sheet P."/>
            <person name="Cordes M."/>
            <person name="Abu-Threideh J."/>
            <person name="Stoneking T."/>
            <person name="Kalicki J."/>
            <person name="Graves T."/>
            <person name="Harmon G."/>
            <person name="Edwards J."/>
            <person name="Latreille P."/>
            <person name="Courtney L."/>
            <person name="Cloud J."/>
            <person name="Abbott A."/>
            <person name="Scott K."/>
            <person name="Johnson D."/>
            <person name="Minx P."/>
            <person name="Bentley D."/>
            <person name="Fulton B."/>
            <person name="Miller N."/>
            <person name="Greco T."/>
            <person name="Kemp K."/>
            <person name="Kramer J."/>
            <person name="Fulton L."/>
            <person name="Mardis E."/>
            <person name="Dante M."/>
            <person name="Pepin K."/>
            <person name="Hillier L.W."/>
            <person name="Nelson J."/>
            <person name="Spieth J."/>
            <person name="Ryan E."/>
            <person name="Andrews S."/>
            <person name="Geisel C."/>
            <person name="Layman D."/>
            <person name="Du H."/>
            <person name="Ali J."/>
            <person name="Berghoff A."/>
            <person name="Jones K."/>
            <person name="Drone K."/>
            <person name="Cotton M."/>
            <person name="Joshu C."/>
            <person name="Antonoiu B."/>
            <person name="Zidanic M."/>
            <person name="Strong C."/>
            <person name="Sun H."/>
            <person name="Lamar B."/>
            <person name="Yordan C."/>
            <person name="Ma P."/>
            <person name="Zhong J."/>
            <person name="Preston R."/>
            <person name="Vil D."/>
            <person name="Shekher M."/>
            <person name="Matero A."/>
            <person name="Shah R."/>
            <person name="Swaby I.K."/>
            <person name="O'Shaughnessy A."/>
            <person name="Rodriguez M."/>
            <person name="Hoffman J."/>
            <person name="Till S."/>
            <person name="Granat S."/>
            <person name="Shohdy N."/>
            <person name="Hasegawa A."/>
            <person name="Hameed A."/>
            <person name="Lodhi M."/>
            <person name="Johnson A."/>
            <person name="Chen E."/>
            <person name="Marra M.A."/>
            <person name="Martienssen R."/>
            <person name="McCombie W.R."/>
        </authorList>
    </citation>
    <scope>NUCLEOTIDE SEQUENCE [LARGE SCALE GENOMIC DNA]</scope>
    <source>
        <strain>cv. Columbia</strain>
    </source>
</reference>
<reference key="2">
    <citation type="journal article" date="2017" name="Plant J.">
        <title>Araport11: a complete reannotation of the Arabidopsis thaliana reference genome.</title>
        <authorList>
            <person name="Cheng C.Y."/>
            <person name="Krishnakumar V."/>
            <person name="Chan A.P."/>
            <person name="Thibaud-Nissen F."/>
            <person name="Schobel S."/>
            <person name="Town C.D."/>
        </authorList>
    </citation>
    <scope>GENOME REANNOTATION</scope>
    <source>
        <strain>cv. Columbia</strain>
    </source>
</reference>
<reference key="3">
    <citation type="submission" date="2004-12" db="EMBL/GenBank/DDBJ databases">
        <title>Arabidopsis ORF clones.</title>
        <authorList>
            <person name="Cheuk R.F."/>
            <person name="Chen H."/>
            <person name="Kim C.J."/>
            <person name="Shinn P."/>
            <person name="Ecker J.R."/>
        </authorList>
    </citation>
    <scope>NUCLEOTIDE SEQUENCE [LARGE SCALE MRNA]</scope>
    <source>
        <strain>cv. Columbia</strain>
    </source>
</reference>
<reference key="4">
    <citation type="submission" date="2006-07" db="EMBL/GenBank/DDBJ databases">
        <title>Large-scale analysis of RIKEN Arabidopsis full-length (RAFL) cDNAs.</title>
        <authorList>
            <person name="Totoki Y."/>
            <person name="Seki M."/>
            <person name="Ishida J."/>
            <person name="Nakajima M."/>
            <person name="Enju A."/>
            <person name="Kamiya A."/>
            <person name="Narusaka M."/>
            <person name="Shin-i T."/>
            <person name="Nakagawa M."/>
            <person name="Sakamoto N."/>
            <person name="Oishi K."/>
            <person name="Kohara Y."/>
            <person name="Kobayashi M."/>
            <person name="Toyoda A."/>
            <person name="Sakaki Y."/>
            <person name="Sakurai T."/>
            <person name="Iida K."/>
            <person name="Akiyama K."/>
            <person name="Satou M."/>
            <person name="Toyoda T."/>
            <person name="Konagaya A."/>
            <person name="Carninci P."/>
            <person name="Kawai J."/>
            <person name="Hayashizaki Y."/>
            <person name="Shinozaki K."/>
        </authorList>
    </citation>
    <scope>NUCLEOTIDE SEQUENCE [LARGE SCALE MRNA] OF 369-562</scope>
    <source>
        <strain>cv. Columbia</strain>
    </source>
</reference>
<reference key="5">
    <citation type="journal article" date="2009" name="J. Proteomics">
        <title>Phosphoproteomic analysis of nuclei-enriched fractions from Arabidopsis thaliana.</title>
        <authorList>
            <person name="Jones A.M.E."/>
            <person name="MacLean D."/>
            <person name="Studholme D.J."/>
            <person name="Serna-Sanz A."/>
            <person name="Andreasson E."/>
            <person name="Rathjen J.P."/>
            <person name="Peck S.C."/>
        </authorList>
    </citation>
    <scope>IDENTIFICATION BY MASS SPECTROMETRY [LARGE SCALE ANALYSIS]</scope>
    <source>
        <strain>cv. Columbia</strain>
    </source>
</reference>
<reference key="6">
    <citation type="journal article" date="2013" name="Plant Cell">
        <title>Flying saucer1 is a transmembrane RING E3 ubiquitin ligase that regulates the degree of pectin methylesterification in Arabidopsis seed mucilage.</title>
        <authorList>
            <person name="Voiniciuc C."/>
            <person name="Dean G.H."/>
            <person name="Griffiths J.S."/>
            <person name="Kirchsteiger K."/>
            <person name="Hwang Y.T."/>
            <person name="Gillett A."/>
            <person name="Dow G."/>
            <person name="Western T.L."/>
            <person name="Estelle M."/>
            <person name="Haughn G.W."/>
        </authorList>
    </citation>
    <scope>FUNCTION</scope>
    <scope>CATALYTIC ACTIVITY</scope>
    <scope>DOMAIN</scope>
    <scope>SUBCELLULAR LOCATION</scope>
    <scope>TISSUE SPECIFICITY</scope>
    <scope>DISRUPTION PHENOTYPE</scope>
</reference>
<protein>
    <recommendedName>
        <fullName evidence="5">Transmembrane E3 ubiquitin-protein ligase FLY1</fullName>
        <ecNumber evidence="3">2.3.2.27</ecNumber>
    </recommendedName>
    <alternativeName>
        <fullName evidence="4">Protein FLYING SAUCER 1</fullName>
    </alternativeName>
    <alternativeName>
        <fullName evidence="5">RING-type E3 ubiquitin transferase FLY1</fullName>
    </alternativeName>
</protein>
<evidence type="ECO:0000255" key="1"/>
<evidence type="ECO:0000255" key="2">
    <source>
        <dbReference type="PROSITE-ProRule" id="PRU00175"/>
    </source>
</evidence>
<evidence type="ECO:0000269" key="3">
    <source>
    </source>
</evidence>
<evidence type="ECO:0000303" key="4">
    <source>
    </source>
</evidence>
<evidence type="ECO:0000305" key="5"/>
<evidence type="ECO:0000305" key="6">
    <source>
    </source>
</evidence>
<evidence type="ECO:0000312" key="7">
    <source>
        <dbReference type="Araport" id="AT4G28370"/>
    </source>
</evidence>
<evidence type="ECO:0000312" key="8">
    <source>
        <dbReference type="EMBL" id="CAA16876.2"/>
    </source>
</evidence>
<name>FLY1_ARATH</name>
<sequence length="562" mass="64604">MKKREHLGLGFFEWQIILWLSIWLAISQQALGLRPIREKPRSWSDEWLFGRKQEAEVGPFSAWNITGTYRGTWKFLNSLNSSSKFQDFQKENGNSVVELVAVPTKITGVHYVQGVVVFHDVFDNEQNVGGAQINLEGVYIWPFRQLRLVANSGKESDSGQEDNNLLSNPYHLLGIFSSQVFQESPRDRLLKRKLSPVNEMEKHCNIEIAAQVSRVASSENNGDKNYYHMEGLMESPGVGDDGDCFSPLLLNATSVNVEVYYNKAVNYTLMVTFVSFLQVLLLIRQMEHGNTQSGAAKVSIVMIGQQAIMDAYLCLLHLTAGILVESLFNAFATAAFFKFVVFSIFEMRYLLAIWKATRPSNSGEGWETMRRELSFLYSRFYGILLGGILIMYQFHNYMQPILLLMYSFWIPQIVANVVRDSRKPLHPYYILGMTATRLAIPLYVFGCPHNFMRVEPNKVWCICLCTFMGLQAVILLLQHYFGSRCFVPRQMLPEKYNYHRRFNRDVSRTTDCVICMTAIDLRQHTSDCMVTPCEHFFHSGCLQRWMDIKMECPTCRRSLPPA</sequence>
<dbReference type="EC" id="2.3.2.27" evidence="3"/>
<dbReference type="EMBL" id="AL021749">
    <property type="protein sequence ID" value="CAA16876.2"/>
    <property type="status" value="ALT_SEQ"/>
    <property type="molecule type" value="Genomic_DNA"/>
</dbReference>
<dbReference type="EMBL" id="AL161572">
    <property type="protein sequence ID" value="CAB79639.1"/>
    <property type="status" value="ALT_SEQ"/>
    <property type="molecule type" value="Genomic_DNA"/>
</dbReference>
<dbReference type="EMBL" id="CP002687">
    <property type="protein sequence ID" value="AEE85475.1"/>
    <property type="molecule type" value="Genomic_DNA"/>
</dbReference>
<dbReference type="EMBL" id="CP002687">
    <property type="protein sequence ID" value="ANM66313.1"/>
    <property type="molecule type" value="Genomic_DNA"/>
</dbReference>
<dbReference type="EMBL" id="CP002687">
    <property type="protein sequence ID" value="ANM66314.1"/>
    <property type="molecule type" value="Genomic_DNA"/>
</dbReference>
<dbReference type="EMBL" id="CP002687">
    <property type="protein sequence ID" value="ANM66315.1"/>
    <property type="molecule type" value="Genomic_DNA"/>
</dbReference>
<dbReference type="EMBL" id="BT020274">
    <property type="protein sequence ID" value="AAV84495.1"/>
    <property type="molecule type" value="mRNA"/>
</dbReference>
<dbReference type="EMBL" id="AK229589">
    <property type="protein sequence ID" value="BAF01437.1"/>
    <property type="molecule type" value="mRNA"/>
</dbReference>
<dbReference type="PIR" id="D85330">
    <property type="entry name" value="D85330"/>
</dbReference>
<dbReference type="RefSeq" id="NP_001328219.1">
    <property type="nucleotide sequence ID" value="NM_001341912.1"/>
</dbReference>
<dbReference type="RefSeq" id="NP_001328220.1">
    <property type="nucleotide sequence ID" value="NM_001341913.1"/>
</dbReference>
<dbReference type="RefSeq" id="NP_001328221.1">
    <property type="nucleotide sequence ID" value="NM_001341914.1"/>
</dbReference>
<dbReference type="RefSeq" id="NP_194566.3">
    <property type="nucleotide sequence ID" value="NM_118978.4"/>
</dbReference>
<dbReference type="FunCoup" id="Q5PP23">
    <property type="interactions" value="992"/>
</dbReference>
<dbReference type="IntAct" id="Q5PP23">
    <property type="interactions" value="4"/>
</dbReference>
<dbReference type="STRING" id="3702.Q5PP23"/>
<dbReference type="PaxDb" id="3702-AT4G28370.1"/>
<dbReference type="ProteomicsDB" id="230626"/>
<dbReference type="EnsemblPlants" id="AT4G28370.1">
    <property type="protein sequence ID" value="AT4G28370.1"/>
    <property type="gene ID" value="AT4G28370"/>
</dbReference>
<dbReference type="EnsemblPlants" id="AT4G28370.2">
    <property type="protein sequence ID" value="AT4G28370.2"/>
    <property type="gene ID" value="AT4G28370"/>
</dbReference>
<dbReference type="EnsemblPlants" id="AT4G28370.3">
    <property type="protein sequence ID" value="AT4G28370.3"/>
    <property type="gene ID" value="AT4G28370"/>
</dbReference>
<dbReference type="EnsemblPlants" id="AT4G28370.4">
    <property type="protein sequence ID" value="AT4G28370.4"/>
    <property type="gene ID" value="AT4G28370"/>
</dbReference>
<dbReference type="GeneID" id="828953"/>
<dbReference type="Gramene" id="AT4G28370.1">
    <property type="protein sequence ID" value="AT4G28370.1"/>
    <property type="gene ID" value="AT4G28370"/>
</dbReference>
<dbReference type="Gramene" id="AT4G28370.2">
    <property type="protein sequence ID" value="AT4G28370.2"/>
    <property type="gene ID" value="AT4G28370"/>
</dbReference>
<dbReference type="Gramene" id="AT4G28370.3">
    <property type="protein sequence ID" value="AT4G28370.3"/>
    <property type="gene ID" value="AT4G28370"/>
</dbReference>
<dbReference type="Gramene" id="AT4G28370.4">
    <property type="protein sequence ID" value="AT4G28370.4"/>
    <property type="gene ID" value="AT4G28370"/>
</dbReference>
<dbReference type="KEGG" id="ath:AT4G28370"/>
<dbReference type="Araport" id="AT4G28370"/>
<dbReference type="TAIR" id="AT4G28370">
    <property type="gene designation" value="FLY1"/>
</dbReference>
<dbReference type="eggNOG" id="KOG0828">
    <property type="taxonomic scope" value="Eukaryota"/>
</dbReference>
<dbReference type="HOGENOM" id="CLU_038877_0_0_1"/>
<dbReference type="InParanoid" id="Q5PP23"/>
<dbReference type="OMA" id="RFDQGAN"/>
<dbReference type="OrthoDB" id="9984778at2759"/>
<dbReference type="PhylomeDB" id="Q5PP23"/>
<dbReference type="UniPathway" id="UPA00143"/>
<dbReference type="PRO" id="PR:Q5PP23"/>
<dbReference type="Proteomes" id="UP000006548">
    <property type="component" value="Chromosome 4"/>
</dbReference>
<dbReference type="ExpressionAtlas" id="Q5PP23">
    <property type="expression patterns" value="baseline and differential"/>
</dbReference>
<dbReference type="GO" id="GO:0012505">
    <property type="term" value="C:endomembrane system"/>
    <property type="evidence" value="ECO:0000314"/>
    <property type="project" value="TAIR"/>
</dbReference>
<dbReference type="GO" id="GO:0016020">
    <property type="term" value="C:membrane"/>
    <property type="evidence" value="ECO:0007669"/>
    <property type="project" value="UniProtKB-KW"/>
</dbReference>
<dbReference type="GO" id="GO:0004842">
    <property type="term" value="F:ubiquitin-protein transferase activity"/>
    <property type="evidence" value="ECO:0000314"/>
    <property type="project" value="TAIR"/>
</dbReference>
<dbReference type="GO" id="GO:0008270">
    <property type="term" value="F:zinc ion binding"/>
    <property type="evidence" value="ECO:0007669"/>
    <property type="project" value="UniProtKB-KW"/>
</dbReference>
<dbReference type="GO" id="GO:0080001">
    <property type="term" value="P:mucilage extrusion from seed coat"/>
    <property type="evidence" value="ECO:0000315"/>
    <property type="project" value="TAIR"/>
</dbReference>
<dbReference type="GO" id="GO:0048363">
    <property type="term" value="P:mucilage pectin metabolic process"/>
    <property type="evidence" value="ECO:0000315"/>
    <property type="project" value="TAIR"/>
</dbReference>
<dbReference type="GO" id="GO:0009827">
    <property type="term" value="P:plant-type cell wall modification"/>
    <property type="evidence" value="ECO:0000315"/>
    <property type="project" value="TAIR"/>
</dbReference>
<dbReference type="GO" id="GO:0016567">
    <property type="term" value="P:protein ubiquitination"/>
    <property type="evidence" value="ECO:0007669"/>
    <property type="project" value="UniProtKB-UniPathway"/>
</dbReference>
<dbReference type="CDD" id="cd23117">
    <property type="entry name" value="RING-H2_TUL1-like"/>
    <property type="match status" value="1"/>
</dbReference>
<dbReference type="FunFam" id="3.30.40.10:FF:000338">
    <property type="entry name" value="E3 ubiquitin-protein ligase, putative"/>
    <property type="match status" value="1"/>
</dbReference>
<dbReference type="Gene3D" id="3.30.40.10">
    <property type="entry name" value="Zinc/RING finger domain, C3HC4 (zinc finger)"/>
    <property type="match status" value="1"/>
</dbReference>
<dbReference type="InterPro" id="IPR021319">
    <property type="entry name" value="DUF2921"/>
</dbReference>
<dbReference type="InterPro" id="IPR050731">
    <property type="entry name" value="HRD1_E3_ubiq-ligases"/>
</dbReference>
<dbReference type="InterPro" id="IPR001841">
    <property type="entry name" value="Znf_RING"/>
</dbReference>
<dbReference type="InterPro" id="IPR011016">
    <property type="entry name" value="Znf_RING-CH"/>
</dbReference>
<dbReference type="InterPro" id="IPR013083">
    <property type="entry name" value="Znf_RING/FYVE/PHD"/>
</dbReference>
<dbReference type="PANTHER" id="PTHR22763">
    <property type="entry name" value="RING ZINC FINGER PROTEIN"/>
    <property type="match status" value="1"/>
</dbReference>
<dbReference type="PANTHER" id="PTHR22763:SF162">
    <property type="entry name" value="TRANSMEMBRANE E3 UBIQUITIN-PROTEIN LIGASE 1"/>
    <property type="match status" value="1"/>
</dbReference>
<dbReference type="Pfam" id="PF11145">
    <property type="entry name" value="DUF2921"/>
    <property type="match status" value="1"/>
</dbReference>
<dbReference type="Pfam" id="PF13639">
    <property type="entry name" value="zf-RING_2"/>
    <property type="match status" value="1"/>
</dbReference>
<dbReference type="SMART" id="SM00184">
    <property type="entry name" value="RING"/>
    <property type="match status" value="1"/>
</dbReference>
<dbReference type="SMART" id="SM00744">
    <property type="entry name" value="RINGv"/>
    <property type="match status" value="1"/>
</dbReference>
<dbReference type="SUPFAM" id="SSF57850">
    <property type="entry name" value="RING/U-box"/>
    <property type="match status" value="1"/>
</dbReference>
<dbReference type="PROSITE" id="PS50089">
    <property type="entry name" value="ZF_RING_2"/>
    <property type="match status" value="1"/>
</dbReference>
<proteinExistence type="evidence at protein level"/>
<keyword id="KW-0472">Membrane</keyword>
<keyword id="KW-0479">Metal-binding</keyword>
<keyword id="KW-1185">Reference proteome</keyword>
<keyword id="KW-0732">Signal</keyword>
<keyword id="KW-0808">Transferase</keyword>
<keyword id="KW-0812">Transmembrane</keyword>
<keyword id="KW-1133">Transmembrane helix</keyword>
<keyword id="KW-0833">Ubl conjugation pathway</keyword>
<keyword id="KW-0862">Zinc</keyword>
<keyword id="KW-0863">Zinc-finger</keyword>
<accession>Q5PP23</accession>
<accession>O49446</accession>
<accession>Q0WN63</accession>
<comment type="function">
    <text evidence="3">E3 ubiquitin-protein ligase that regulates the degree of methylesterification of pectin in seed mucilage. May be involved in the recycling of pectin methylesterase enzymes in the endomembrane system of seed coat epidermal cells. Possesses E3 ubiquitin-protein ligase activity in vitro when associated with the E1 enzyme UBA1 and the E2 enzyme UBC8. May be involved in xylem development.</text>
</comment>
<comment type="catalytic activity">
    <reaction evidence="3">
        <text>S-ubiquitinyl-[E2 ubiquitin-conjugating enzyme]-L-cysteine + [acceptor protein]-L-lysine = [E2 ubiquitin-conjugating enzyme]-L-cysteine + N(6)-ubiquitinyl-[acceptor protein]-L-lysine.</text>
        <dbReference type="EC" id="2.3.2.27"/>
    </reaction>
</comment>
<comment type="pathway">
    <text evidence="5">Protein modification; protein ubiquitination.</text>
</comment>
<comment type="subcellular location">
    <subcellularLocation>
        <location evidence="3">Endomembrane system</location>
        <topology evidence="1">Multi-pass membrane protein</topology>
    </subcellularLocation>
</comment>
<comment type="tissue specificity">
    <text evidence="3">Highly expressed in stems. Expressed in root xylem and seed coat.</text>
</comment>
<comment type="domain">
    <text evidence="6">The RING-type zinc finger domain is required for E3 ligase activity.</text>
</comment>
<comment type="disruption phenotype">
    <text evidence="3">Seed coat mutant displaying primary wall detachment, reduced mucilage extrusion, and increased mucilage adherence. Decreased degree of homogalacturonan methylesterification in seed mucilage.</text>
</comment>
<comment type="sequence caution" evidence="5">
    <conflict type="erroneous gene model prediction">
        <sequence resource="EMBL-CDS" id="CAA16876"/>
    </conflict>
</comment>
<comment type="sequence caution" evidence="5">
    <conflict type="erroneous gene model prediction">
        <sequence resource="EMBL-CDS" id="CAB79639"/>
    </conflict>
</comment>
<feature type="signal peptide" evidence="1">
    <location>
        <begin position="1"/>
        <end position="32"/>
    </location>
</feature>
<feature type="chain" id="PRO_0000443822" description="Transmembrane E3 ubiquitin-protein ligase FLY1">
    <location>
        <begin position="33"/>
        <end position="562"/>
    </location>
</feature>
<feature type="topological domain" description="Lumenal" evidence="5">
    <location>
        <begin position="33"/>
        <end position="262"/>
    </location>
</feature>
<feature type="transmembrane region" description="Helical" evidence="1">
    <location>
        <begin position="263"/>
        <end position="283"/>
    </location>
</feature>
<feature type="topological domain" description="Cytoplasmic" evidence="5">
    <location>
        <begin position="284"/>
        <end position="297"/>
    </location>
</feature>
<feature type="transmembrane region" description="Helical" evidence="1">
    <location>
        <begin position="298"/>
        <end position="318"/>
    </location>
</feature>
<feature type="topological domain" description="Lumenal" evidence="5">
    <location>
        <begin position="319"/>
        <end position="321"/>
    </location>
</feature>
<feature type="transmembrane region" description="Helical" evidence="1">
    <location>
        <begin position="322"/>
        <end position="342"/>
    </location>
</feature>
<feature type="topological domain" description="Cytoplasmic" evidence="5">
    <location>
        <begin position="343"/>
        <end position="373"/>
    </location>
</feature>
<feature type="transmembrane region" description="Helical" evidence="1">
    <location>
        <begin position="374"/>
        <end position="394"/>
    </location>
</feature>
<feature type="topological domain" description="Lumenal" evidence="5">
    <location>
        <begin position="395"/>
        <end position="397"/>
    </location>
</feature>
<feature type="transmembrane region" description="Helical" evidence="1">
    <location>
        <begin position="398"/>
        <end position="418"/>
    </location>
</feature>
<feature type="topological domain" description="Cytoplasmic" evidence="5">
    <location>
        <begin position="419"/>
        <end position="426"/>
    </location>
</feature>
<feature type="transmembrane region" description="Helical" evidence="1">
    <location>
        <begin position="427"/>
        <end position="447"/>
    </location>
</feature>
<feature type="topological domain" description="Lumenal" evidence="5">
    <location>
        <begin position="448"/>
        <end position="458"/>
    </location>
</feature>
<feature type="transmembrane region" description="Helical" evidence="1">
    <location>
        <begin position="459"/>
        <end position="479"/>
    </location>
</feature>
<feature type="topological domain" description="Cytoplasmic" evidence="5">
    <location>
        <begin position="480"/>
        <end position="562"/>
    </location>
</feature>
<feature type="zinc finger region" description="RING-type; atypical" evidence="2">
    <location>
        <begin position="512"/>
        <end position="556"/>
    </location>
</feature>